<sequence length="320" mass="34498">MSGGSSGTQQREREILLVAHPGRAEITETARRVGKIFERAGIGLRVLVDEVDSTRIEPMDGMAADEFLVPGLEVTIVQAGPDAALGCEMVLVLGGDGTFLRAAELAQAASIPVLGINLGRIGFLAETEAEHLDEALAQVVRREYRIEHRMTLDVLVRVDDEIIERGWALNEASIENRSRLGVLEVVLEVDGRPVSAFGCDGVLISTPTGSTAYAFSAGGPVVWPELEALLVVPSNAHALFARPLVTSPNSLIAVETVAGSHDGLVFCDGRRTLELPAGARVEVVRGKEPVRWIRLDSAPFADRMVRKFELPVTGWRGRKP</sequence>
<dbReference type="EC" id="2.7.1.23" evidence="1"/>
<dbReference type="EMBL" id="CP000431">
    <property type="protein sequence ID" value="ABG92766.1"/>
    <property type="molecule type" value="Genomic_DNA"/>
</dbReference>
<dbReference type="RefSeq" id="WP_009473603.1">
    <property type="nucleotide sequence ID" value="NC_008268.1"/>
</dbReference>
<dbReference type="SMR" id="Q0SI70"/>
<dbReference type="KEGG" id="rha:RHA1_ro00935"/>
<dbReference type="eggNOG" id="COG0061">
    <property type="taxonomic scope" value="Bacteria"/>
</dbReference>
<dbReference type="HOGENOM" id="CLU_008831_0_0_11"/>
<dbReference type="OrthoDB" id="9774737at2"/>
<dbReference type="Proteomes" id="UP000008710">
    <property type="component" value="Chromosome"/>
</dbReference>
<dbReference type="GO" id="GO:0005737">
    <property type="term" value="C:cytoplasm"/>
    <property type="evidence" value="ECO:0007669"/>
    <property type="project" value="UniProtKB-SubCell"/>
</dbReference>
<dbReference type="GO" id="GO:0005524">
    <property type="term" value="F:ATP binding"/>
    <property type="evidence" value="ECO:0007669"/>
    <property type="project" value="UniProtKB-KW"/>
</dbReference>
<dbReference type="GO" id="GO:0046872">
    <property type="term" value="F:metal ion binding"/>
    <property type="evidence" value="ECO:0007669"/>
    <property type="project" value="UniProtKB-UniRule"/>
</dbReference>
<dbReference type="GO" id="GO:0051287">
    <property type="term" value="F:NAD binding"/>
    <property type="evidence" value="ECO:0007669"/>
    <property type="project" value="UniProtKB-ARBA"/>
</dbReference>
<dbReference type="GO" id="GO:0003951">
    <property type="term" value="F:NAD+ kinase activity"/>
    <property type="evidence" value="ECO:0007669"/>
    <property type="project" value="UniProtKB-UniRule"/>
</dbReference>
<dbReference type="GO" id="GO:0019674">
    <property type="term" value="P:NAD metabolic process"/>
    <property type="evidence" value="ECO:0007669"/>
    <property type="project" value="InterPro"/>
</dbReference>
<dbReference type="GO" id="GO:0006741">
    <property type="term" value="P:NADP biosynthetic process"/>
    <property type="evidence" value="ECO:0007669"/>
    <property type="project" value="UniProtKB-UniRule"/>
</dbReference>
<dbReference type="FunFam" id="2.60.200.30:FF:000007">
    <property type="entry name" value="NAD kinase"/>
    <property type="match status" value="1"/>
</dbReference>
<dbReference type="Gene3D" id="3.40.50.10330">
    <property type="entry name" value="Probable inorganic polyphosphate/atp-NAD kinase, domain 1"/>
    <property type="match status" value="1"/>
</dbReference>
<dbReference type="Gene3D" id="2.60.200.30">
    <property type="entry name" value="Probable inorganic polyphosphate/atp-NAD kinase, domain 2"/>
    <property type="match status" value="1"/>
</dbReference>
<dbReference type="HAMAP" id="MF_00361">
    <property type="entry name" value="NAD_kinase"/>
    <property type="match status" value="1"/>
</dbReference>
<dbReference type="InterPro" id="IPR017438">
    <property type="entry name" value="ATP-NAD_kinase_N"/>
</dbReference>
<dbReference type="InterPro" id="IPR017437">
    <property type="entry name" value="ATP-NAD_kinase_PpnK-typ_C"/>
</dbReference>
<dbReference type="InterPro" id="IPR016064">
    <property type="entry name" value="NAD/diacylglycerol_kinase_sf"/>
</dbReference>
<dbReference type="InterPro" id="IPR002504">
    <property type="entry name" value="NADK"/>
</dbReference>
<dbReference type="NCBIfam" id="NF002892">
    <property type="entry name" value="PRK03372.1"/>
    <property type="match status" value="1"/>
</dbReference>
<dbReference type="PANTHER" id="PTHR20275">
    <property type="entry name" value="NAD KINASE"/>
    <property type="match status" value="1"/>
</dbReference>
<dbReference type="PANTHER" id="PTHR20275:SF0">
    <property type="entry name" value="NAD KINASE"/>
    <property type="match status" value="1"/>
</dbReference>
<dbReference type="Pfam" id="PF01513">
    <property type="entry name" value="NAD_kinase"/>
    <property type="match status" value="1"/>
</dbReference>
<dbReference type="Pfam" id="PF20143">
    <property type="entry name" value="NAD_kinase_C"/>
    <property type="match status" value="1"/>
</dbReference>
<dbReference type="SUPFAM" id="SSF111331">
    <property type="entry name" value="NAD kinase/diacylglycerol kinase-like"/>
    <property type="match status" value="1"/>
</dbReference>
<proteinExistence type="inferred from homology"/>
<organism>
    <name type="scientific">Rhodococcus jostii (strain RHA1)</name>
    <dbReference type="NCBI Taxonomy" id="101510"/>
    <lineage>
        <taxon>Bacteria</taxon>
        <taxon>Bacillati</taxon>
        <taxon>Actinomycetota</taxon>
        <taxon>Actinomycetes</taxon>
        <taxon>Mycobacteriales</taxon>
        <taxon>Nocardiaceae</taxon>
        <taxon>Rhodococcus</taxon>
    </lineage>
</organism>
<evidence type="ECO:0000255" key="1">
    <source>
        <dbReference type="HAMAP-Rule" id="MF_00361"/>
    </source>
</evidence>
<keyword id="KW-0067">ATP-binding</keyword>
<keyword id="KW-0963">Cytoplasm</keyword>
<keyword id="KW-0418">Kinase</keyword>
<keyword id="KW-0520">NAD</keyword>
<keyword id="KW-0521">NADP</keyword>
<keyword id="KW-0547">Nucleotide-binding</keyword>
<keyword id="KW-0808">Transferase</keyword>
<protein>
    <recommendedName>
        <fullName evidence="1">NAD kinase</fullName>
        <ecNumber evidence="1">2.7.1.23</ecNumber>
    </recommendedName>
    <alternativeName>
        <fullName evidence="1">ATP-dependent NAD kinase</fullName>
    </alternativeName>
</protein>
<gene>
    <name evidence="1" type="primary">nadK</name>
    <name type="ordered locus">RHA1_ro00935</name>
</gene>
<name>NADK_RHOJR</name>
<feature type="chain" id="PRO_1000005437" description="NAD kinase">
    <location>
        <begin position="1"/>
        <end position="320"/>
    </location>
</feature>
<feature type="active site" description="Proton acceptor" evidence="1">
    <location>
        <position position="96"/>
    </location>
</feature>
<feature type="binding site" evidence="1">
    <location>
        <begin position="96"/>
        <end position="97"/>
    </location>
    <ligand>
        <name>NAD(+)</name>
        <dbReference type="ChEBI" id="CHEBI:57540"/>
    </ligand>
</feature>
<feature type="binding site" evidence="1">
    <location>
        <position position="101"/>
    </location>
    <ligand>
        <name>NAD(+)</name>
        <dbReference type="ChEBI" id="CHEBI:57540"/>
    </ligand>
</feature>
<feature type="binding site" evidence="1">
    <location>
        <begin position="170"/>
        <end position="171"/>
    </location>
    <ligand>
        <name>NAD(+)</name>
        <dbReference type="ChEBI" id="CHEBI:57540"/>
    </ligand>
</feature>
<feature type="binding site" evidence="1">
    <location>
        <position position="200"/>
    </location>
    <ligand>
        <name>NAD(+)</name>
        <dbReference type="ChEBI" id="CHEBI:57540"/>
    </ligand>
</feature>
<feature type="binding site" evidence="1">
    <location>
        <begin position="211"/>
        <end position="216"/>
    </location>
    <ligand>
        <name>NAD(+)</name>
        <dbReference type="ChEBI" id="CHEBI:57540"/>
    </ligand>
</feature>
<reference key="1">
    <citation type="journal article" date="2006" name="Proc. Natl. Acad. Sci. U.S.A.">
        <title>The complete genome of Rhodococcus sp. RHA1 provides insights into a catabolic powerhouse.</title>
        <authorList>
            <person name="McLeod M.P."/>
            <person name="Warren R.L."/>
            <person name="Hsiao W.W.L."/>
            <person name="Araki N."/>
            <person name="Myhre M."/>
            <person name="Fernandes C."/>
            <person name="Miyazawa D."/>
            <person name="Wong W."/>
            <person name="Lillquist A.L."/>
            <person name="Wang D."/>
            <person name="Dosanjh M."/>
            <person name="Hara H."/>
            <person name="Petrescu A."/>
            <person name="Morin R.D."/>
            <person name="Yang G."/>
            <person name="Stott J.M."/>
            <person name="Schein J.E."/>
            <person name="Shin H."/>
            <person name="Smailus D."/>
            <person name="Siddiqui A.S."/>
            <person name="Marra M.A."/>
            <person name="Jones S.J.M."/>
            <person name="Holt R."/>
            <person name="Brinkman F.S.L."/>
            <person name="Miyauchi K."/>
            <person name="Fukuda M."/>
            <person name="Davies J.E."/>
            <person name="Mohn W.W."/>
            <person name="Eltis L.D."/>
        </authorList>
    </citation>
    <scope>NUCLEOTIDE SEQUENCE [LARGE SCALE GENOMIC DNA]</scope>
    <source>
        <strain>RHA1</strain>
    </source>
</reference>
<comment type="function">
    <text evidence="1">Involved in the regulation of the intracellular balance of NAD and NADP, and is a key enzyme in the biosynthesis of NADP. Catalyzes specifically the phosphorylation on 2'-hydroxyl of the adenosine moiety of NAD to yield NADP.</text>
</comment>
<comment type="catalytic activity">
    <reaction evidence="1">
        <text>NAD(+) + ATP = ADP + NADP(+) + H(+)</text>
        <dbReference type="Rhea" id="RHEA:18629"/>
        <dbReference type="ChEBI" id="CHEBI:15378"/>
        <dbReference type="ChEBI" id="CHEBI:30616"/>
        <dbReference type="ChEBI" id="CHEBI:57540"/>
        <dbReference type="ChEBI" id="CHEBI:58349"/>
        <dbReference type="ChEBI" id="CHEBI:456216"/>
        <dbReference type="EC" id="2.7.1.23"/>
    </reaction>
</comment>
<comment type="cofactor">
    <cofactor evidence="1">
        <name>a divalent metal cation</name>
        <dbReference type="ChEBI" id="CHEBI:60240"/>
    </cofactor>
</comment>
<comment type="subcellular location">
    <subcellularLocation>
        <location evidence="1">Cytoplasm</location>
    </subcellularLocation>
</comment>
<comment type="similarity">
    <text evidence="1">Belongs to the NAD kinase family.</text>
</comment>
<accession>Q0SI70</accession>